<keyword id="KW-0007">Acetylation</keyword>
<keyword id="KW-0009">Actin-binding</keyword>
<keyword id="KW-0175">Coiled coil</keyword>
<keyword id="KW-0963">Cytoplasm</keyword>
<keyword id="KW-0968">Cytoplasmic vesicle</keyword>
<keyword id="KW-0206">Cytoskeleton</keyword>
<keyword id="KW-0903">Direct protein sequencing</keyword>
<keyword id="KW-0225">Disease variant</keyword>
<keyword id="KW-0472">Membrane</keyword>
<keyword id="KW-0597">Phosphoprotein</keyword>
<keyword id="KW-1267">Proteomics identification</keyword>
<keyword id="KW-1185">Reference proteome</keyword>
<keyword id="KW-0677">Repeat</keyword>
<keyword id="KW-0832">Ubl conjugation</keyword>
<keyword id="KW-0853">WD repeat</keyword>
<sequence>MSRQVVRSSKFRHVFGQPAKADQCYEDVRVSQTTWDSGFCAVNPKFVALICEASGGGAFLVLPLGKTGRVDKNAPTVCGHTAPVLDIAWCPHNDNVIASGSEDCTVMVWEIPDGGLMLPLREPVVTLEGHTKRVGIVAWHTTAQNVLLSAGCDNVIMVWDVGTGAAMLTLGPEVHPDTIYSVDWSRDGGLICTSCRDKRVRIIEPRKGTVVAEKDRPHEGTRPVRAVFVSEGKILTTGFSRMSERQVALWDTKHLEEPLSLQELDTSSGVLLPFFDPDTNIVYLCGKGDSSIRYFEITSEAPFLHYLSMFSSKESQRGMGYMPKRGLEVNKCEIARFYKLHERRCEPIAMTVPRKSDLFQEDLYPPTAGPDPALTAEEWLGGRDAGPLLISLKDGYVPPKSRELRVNRGLDTGRRRAAPEASGTPSSDAVSRLEEEMRKLQATVQELQKRLDRLEETVQAK</sequence>
<comment type="function">
    <text evidence="5">May be a crucial component of the cytoskeleton of highly motile cells, functioning both in the invagination of large pieces of plasma membrane, as well as in forming protrusions of the plasma membrane involved in cell locomotion. In mycobacteria-infected cells, its retention on the phagosomal membrane prevents fusion between phagosomes and lysosomes.</text>
</comment>
<comment type="subunit">
    <text>Binds actin.</text>
</comment>
<comment type="interaction">
    <interactant intactId="EBI-1046676">
        <id>P31146</id>
    </interactant>
    <interactant intactId="EBI-77613">
        <id>P05067</id>
        <label>APP</label>
    </interactant>
    <organismsDiffer>false</organismsDiffer>
    <experiments>3</experiments>
</comment>
<comment type="interaction">
    <interactant intactId="EBI-1046676">
        <id>P31146</id>
    </interactant>
    <interactant intactId="EBI-5661036">
        <id>A1L4K1</id>
        <label>FSD2</label>
    </interactant>
    <organismsDiffer>false</organismsDiffer>
    <experiments>7</experiments>
</comment>
<comment type="interaction">
    <interactant intactId="EBI-1046676">
        <id>P31146</id>
    </interactant>
    <interactant intactId="EBI-618309">
        <id>Q08379</id>
        <label>GOLGA2</label>
    </interactant>
    <organismsDiffer>false</organismsDiffer>
    <experiments>3</experiments>
</comment>
<comment type="interaction">
    <interactant intactId="EBI-1046676">
        <id>P31146</id>
    </interactant>
    <interactant intactId="EBI-9091197">
        <id>Q8IY31-3</id>
        <label>IFT20</label>
    </interactant>
    <organismsDiffer>false</organismsDiffer>
    <experiments>3</experiments>
</comment>
<comment type="interaction">
    <interactant intactId="EBI-1046676">
        <id>P31146</id>
    </interactant>
    <interactant intactId="EBI-739552">
        <id>P43364</id>
        <label>MAGEA11</label>
    </interactant>
    <organismsDiffer>false</organismsDiffer>
    <experiments>3</experiments>
</comment>
<comment type="interaction">
    <interactant intactId="EBI-1046676">
        <id>P31146</id>
    </interactant>
    <interactant intactId="EBI-518675">
        <id>P40763</id>
        <label>STAT3</label>
    </interactant>
    <organismsDiffer>false</organismsDiffer>
    <experiments>2</experiments>
</comment>
<comment type="subcellular location">
    <subcellularLocation>
        <location evidence="1">Cytoplasm</location>
        <location evidence="1">Cytoskeleton</location>
    </subcellularLocation>
    <subcellularLocation>
        <location evidence="1">Cytoplasm</location>
        <location evidence="1">Cell cortex</location>
    </subcellularLocation>
    <subcellularLocation>
        <location evidence="1">Cytoplasmic vesicle</location>
        <location evidence="1">Phagosome membrane</location>
    </subcellularLocation>
    <text evidence="1">In non-infected macrophages, associated with the cortical microtubule network. In mycobacteria-infected macrophages, becomes progressively relocalized and retained around the mycobacterial phagosomes. Retention on the phagosomal membrane is strictly dependent on mycobacterial viability and not due to impaired acidification (By similarity).</text>
</comment>
<comment type="tissue specificity">
    <text>Expressed in brain, thymus, spleen, bone marrow and lymph node. Low in lung and gut.</text>
</comment>
<comment type="PTM">
    <text evidence="8">phosphorylation at Thr-412 by PKC strongly down-regulates the association with actin.</text>
</comment>
<comment type="PTM">
    <text evidence="7">Polyubiquitinated by RNF128 with 'Lys-48'-linked chains, leading to proteasomal degradation.</text>
</comment>
<comment type="disease" evidence="6 9">
    <disease id="DI-03875">
        <name>Immunodeficiency 8 with lymphoproliferation</name>
        <acronym>IMD8</acronym>
        <description>A disease of the immune system leading to recurrent infections, and characterized by CD4+ T-cells lymphopenia. Patients can develop B-cell lymphoproliferation associated with Epstein-Barr virus infection.</description>
        <dbReference type="MIM" id="615401"/>
    </disease>
    <text>The disease is caused by variants affecting the gene represented in this entry.</text>
</comment>
<comment type="similarity">
    <text evidence="11">Belongs to the WD repeat coronin family.</text>
</comment>
<reference key="1">
    <citation type="journal article" date="1995" name="FEBS Lett.">
        <title>Molecular cloning of a novel actin-binding protein, p57, with a WD repeat and a leucine zipper motif.</title>
        <authorList>
            <person name="Suzuki K."/>
            <person name="Nishihata J."/>
            <person name="Arai Y."/>
            <person name="Honma N."/>
            <person name="Yamamoto K."/>
            <person name="Irimura T."/>
            <person name="Toyoshima S."/>
        </authorList>
    </citation>
    <scope>NUCLEOTIDE SEQUENCE [MRNA]</scope>
    <source>
        <tissue>Peripheral blood leukocyte</tissue>
    </source>
</reference>
<reference key="2">
    <citation type="submission" date="1995-12" db="EMBL/GenBank/DDBJ databases">
        <authorList>
            <person name="Grogan A."/>
            <person name="Keep N.H."/>
            <person name="Reeves E."/>
            <person name="Segal A.W."/>
        </authorList>
    </citation>
    <scope>NUCLEOTIDE SEQUENCE [MRNA]</scope>
    <source>
        <tissue>Brain</tissue>
    </source>
</reference>
<reference key="3">
    <citation type="submission" date="1995-08" db="EMBL/GenBank/DDBJ databases">
        <authorList>
            <person name="Liau G."/>
            <person name="Popa I."/>
            <person name="Argraves K."/>
            <person name="Argraves W.S."/>
        </authorList>
    </citation>
    <scope>NUCLEOTIDE SEQUENCE [MRNA]</scope>
    <source>
        <tissue>Kidney</tissue>
    </source>
</reference>
<reference key="4">
    <citation type="submission" date="2002-03" db="EMBL/GenBank/DDBJ databases">
        <title>A new therapeutic strategy of mycobacterium infection by use of anti-TACO sequence.</title>
        <authorList>
            <person name="Kohchi C."/>
            <person name="Inagawa H."/>
            <person name="Makino K."/>
            <person name="Terada H."/>
            <person name="Soma G."/>
        </authorList>
    </citation>
    <scope>NUCLEOTIDE SEQUENCE [MRNA]</scope>
</reference>
<reference key="5">
    <citation type="journal article" date="2004" name="Nat. Genet.">
        <title>Complete sequencing and characterization of 21,243 full-length human cDNAs.</title>
        <authorList>
            <person name="Ota T."/>
            <person name="Suzuki Y."/>
            <person name="Nishikawa T."/>
            <person name="Otsuki T."/>
            <person name="Sugiyama T."/>
            <person name="Irie R."/>
            <person name="Wakamatsu A."/>
            <person name="Hayashi K."/>
            <person name="Sato H."/>
            <person name="Nagai K."/>
            <person name="Kimura K."/>
            <person name="Makita H."/>
            <person name="Sekine M."/>
            <person name="Obayashi M."/>
            <person name="Nishi T."/>
            <person name="Shibahara T."/>
            <person name="Tanaka T."/>
            <person name="Ishii S."/>
            <person name="Yamamoto J."/>
            <person name="Saito K."/>
            <person name="Kawai Y."/>
            <person name="Isono Y."/>
            <person name="Nakamura Y."/>
            <person name="Nagahari K."/>
            <person name="Murakami K."/>
            <person name="Yasuda T."/>
            <person name="Iwayanagi T."/>
            <person name="Wagatsuma M."/>
            <person name="Shiratori A."/>
            <person name="Sudo H."/>
            <person name="Hosoiri T."/>
            <person name="Kaku Y."/>
            <person name="Kodaira H."/>
            <person name="Kondo H."/>
            <person name="Sugawara M."/>
            <person name="Takahashi M."/>
            <person name="Kanda K."/>
            <person name="Yokoi T."/>
            <person name="Furuya T."/>
            <person name="Kikkawa E."/>
            <person name="Omura Y."/>
            <person name="Abe K."/>
            <person name="Kamihara K."/>
            <person name="Katsuta N."/>
            <person name="Sato K."/>
            <person name="Tanikawa M."/>
            <person name="Yamazaki M."/>
            <person name="Ninomiya K."/>
            <person name="Ishibashi T."/>
            <person name="Yamashita H."/>
            <person name="Murakawa K."/>
            <person name="Fujimori K."/>
            <person name="Tanai H."/>
            <person name="Kimata M."/>
            <person name="Watanabe M."/>
            <person name="Hiraoka S."/>
            <person name="Chiba Y."/>
            <person name="Ishida S."/>
            <person name="Ono Y."/>
            <person name="Takiguchi S."/>
            <person name="Watanabe S."/>
            <person name="Yosida M."/>
            <person name="Hotuta T."/>
            <person name="Kusano J."/>
            <person name="Kanehori K."/>
            <person name="Takahashi-Fujii A."/>
            <person name="Hara H."/>
            <person name="Tanase T.-O."/>
            <person name="Nomura Y."/>
            <person name="Togiya S."/>
            <person name="Komai F."/>
            <person name="Hara R."/>
            <person name="Takeuchi K."/>
            <person name="Arita M."/>
            <person name="Imose N."/>
            <person name="Musashino K."/>
            <person name="Yuuki H."/>
            <person name="Oshima A."/>
            <person name="Sasaki N."/>
            <person name="Aotsuka S."/>
            <person name="Yoshikawa Y."/>
            <person name="Matsunawa H."/>
            <person name="Ichihara T."/>
            <person name="Shiohata N."/>
            <person name="Sano S."/>
            <person name="Moriya S."/>
            <person name="Momiyama H."/>
            <person name="Satoh N."/>
            <person name="Takami S."/>
            <person name="Terashima Y."/>
            <person name="Suzuki O."/>
            <person name="Nakagawa S."/>
            <person name="Senoh A."/>
            <person name="Mizoguchi H."/>
            <person name="Goto Y."/>
            <person name="Shimizu F."/>
            <person name="Wakebe H."/>
            <person name="Hishigaki H."/>
            <person name="Watanabe T."/>
            <person name="Sugiyama A."/>
            <person name="Takemoto M."/>
            <person name="Kawakami B."/>
            <person name="Yamazaki M."/>
            <person name="Watanabe K."/>
            <person name="Kumagai A."/>
            <person name="Itakura S."/>
            <person name="Fukuzumi Y."/>
            <person name="Fujimori Y."/>
            <person name="Komiyama M."/>
            <person name="Tashiro H."/>
            <person name="Tanigami A."/>
            <person name="Fujiwara T."/>
            <person name="Ono T."/>
            <person name="Yamada K."/>
            <person name="Fujii Y."/>
            <person name="Ozaki K."/>
            <person name="Hirao M."/>
            <person name="Ohmori Y."/>
            <person name="Kawabata A."/>
            <person name="Hikiji T."/>
            <person name="Kobatake N."/>
            <person name="Inagaki H."/>
            <person name="Ikema Y."/>
            <person name="Okamoto S."/>
            <person name="Okitani R."/>
            <person name="Kawakami T."/>
            <person name="Noguchi S."/>
            <person name="Itoh T."/>
            <person name="Shigeta K."/>
            <person name="Senba T."/>
            <person name="Matsumura K."/>
            <person name="Nakajima Y."/>
            <person name="Mizuno T."/>
            <person name="Morinaga M."/>
            <person name="Sasaki M."/>
            <person name="Togashi T."/>
            <person name="Oyama M."/>
            <person name="Hata H."/>
            <person name="Watanabe M."/>
            <person name="Komatsu T."/>
            <person name="Mizushima-Sugano J."/>
            <person name="Satoh T."/>
            <person name="Shirai Y."/>
            <person name="Takahashi Y."/>
            <person name="Nakagawa K."/>
            <person name="Okumura K."/>
            <person name="Nagase T."/>
            <person name="Nomura N."/>
            <person name="Kikuchi H."/>
            <person name="Masuho Y."/>
            <person name="Yamashita R."/>
            <person name="Nakai K."/>
            <person name="Yada T."/>
            <person name="Nakamura Y."/>
            <person name="Ohara O."/>
            <person name="Isogai T."/>
            <person name="Sugano S."/>
        </authorList>
    </citation>
    <scope>NUCLEOTIDE SEQUENCE [LARGE SCALE MRNA]</scope>
    <source>
        <tissue>Thymus</tissue>
    </source>
</reference>
<reference key="6">
    <citation type="submission" date="2005-07" db="EMBL/GenBank/DDBJ databases">
        <authorList>
            <person name="Mural R.J."/>
            <person name="Istrail S."/>
            <person name="Sutton G.G."/>
            <person name="Florea L."/>
            <person name="Halpern A.L."/>
            <person name="Mobarry C.M."/>
            <person name="Lippert R."/>
            <person name="Walenz B."/>
            <person name="Shatkay H."/>
            <person name="Dew I."/>
            <person name="Miller J.R."/>
            <person name="Flanigan M.J."/>
            <person name="Edwards N.J."/>
            <person name="Bolanos R."/>
            <person name="Fasulo D."/>
            <person name="Halldorsson B.V."/>
            <person name="Hannenhalli S."/>
            <person name="Turner R."/>
            <person name="Yooseph S."/>
            <person name="Lu F."/>
            <person name="Nusskern D.R."/>
            <person name="Shue B.C."/>
            <person name="Zheng X.H."/>
            <person name="Zhong F."/>
            <person name="Delcher A.L."/>
            <person name="Huson D.H."/>
            <person name="Kravitz S.A."/>
            <person name="Mouchard L."/>
            <person name="Reinert K."/>
            <person name="Remington K.A."/>
            <person name="Clark A.G."/>
            <person name="Waterman M.S."/>
            <person name="Eichler E.E."/>
            <person name="Adams M.D."/>
            <person name="Hunkapiller M.W."/>
            <person name="Myers E.W."/>
            <person name="Venter J.C."/>
        </authorList>
    </citation>
    <scope>NUCLEOTIDE SEQUENCE [LARGE SCALE GENOMIC DNA]</scope>
</reference>
<reference key="7">
    <citation type="journal article" date="2004" name="Genome Res.">
        <title>The status, quality, and expansion of the NIH full-length cDNA project: the Mammalian Gene Collection (MGC).</title>
        <authorList>
            <consortium name="The MGC Project Team"/>
        </authorList>
    </citation>
    <scope>NUCLEOTIDE SEQUENCE [LARGE SCALE MRNA]</scope>
    <source>
        <tissue>Brain</tissue>
    </source>
</reference>
<reference key="8">
    <citation type="submission" date="2006-05" db="UniProtKB">
        <authorList>
            <person name="Bienvenut W.V."/>
            <person name="Kanor S."/>
            <person name="Tissot J.-D."/>
            <person name="Quadroni M."/>
        </authorList>
    </citation>
    <scope>PROTEIN SEQUENCE OF 2-9; 50-65; 242-252; 433-448 AND 453-460</scope>
    <scope>CLEAVAGE OF INITIATOR METHIONINE</scope>
    <scope>ACETYLATION AT SER-2</scope>
    <scope>IDENTIFICATION BY MASS SPECTROMETRY</scope>
    <source>
        <tissue>T-cell</tissue>
    </source>
</reference>
<reference key="9">
    <citation type="journal article" date="1992" name="Electrophoresis">
        <title>Microsequences of 145 proteins recorded in the two-dimensional gel protein database of normal human epidermal keratinocytes.</title>
        <authorList>
            <person name="Rasmussen H.H."/>
            <person name="van Damme J."/>
            <person name="Puype M."/>
            <person name="Gesser B."/>
            <person name="Celis J.E."/>
            <person name="Vandekerckhove J."/>
        </authorList>
    </citation>
    <scope>PROTEIN SEQUENCE OF 355-374</scope>
    <source>
        <tissue>Keratinocyte</tissue>
    </source>
</reference>
<reference key="10">
    <citation type="journal article" date="1999" name="Cell">
        <title>A coat protein on phagosomes involved in the intracellular survival of mycobacteria.</title>
        <authorList>
            <person name="Ferrari G."/>
            <person name="Langen H."/>
            <person name="Naito M."/>
            <person name="Pieters J."/>
        </authorList>
    </citation>
    <scope>ROLE IN PHAGOSOME TRAFFICKING</scope>
</reference>
<reference key="11">
    <citation type="journal article" date="2009" name="Clin. Immunol.">
        <title>Severe combined immunodeficiency (SCID) and attention deficit hyperactivity disorder (ADHD) associated with a Coronin-1A mutation and a chromosome 16p11.2 deletion.</title>
        <authorList>
            <person name="Shiow L.R."/>
            <person name="Paris K."/>
            <person name="Akana M.C."/>
            <person name="Cyster J.G."/>
            <person name="Sorensen R.U."/>
            <person name="Puck J.M."/>
        </authorList>
    </citation>
    <scope>INVOLVEMENT IN IMD8</scope>
</reference>
<reference key="12">
    <citation type="journal article" date="2009" name="Sci. Signal.">
        <title>Quantitative phosphoproteomic analysis of T cell receptor signaling reveals system-wide modulation of protein-protein interactions.</title>
        <authorList>
            <person name="Mayya V."/>
            <person name="Lundgren D.H."/>
            <person name="Hwang S.-I."/>
            <person name="Rezaul K."/>
            <person name="Wu L."/>
            <person name="Eng J.K."/>
            <person name="Rodionov V."/>
            <person name="Han D.K."/>
        </authorList>
    </citation>
    <scope>IDENTIFICATION BY MASS SPECTROMETRY [LARGE SCALE ANALYSIS]</scope>
    <source>
        <tissue>Leukemic T-cell</tissue>
    </source>
</reference>
<reference key="13">
    <citation type="journal article" date="2009" name="Science">
        <title>Lysine acetylation targets protein complexes and co-regulates major cellular functions.</title>
        <authorList>
            <person name="Choudhary C."/>
            <person name="Kumar C."/>
            <person name="Gnad F."/>
            <person name="Nielsen M.L."/>
            <person name="Rehman M."/>
            <person name="Walther T.C."/>
            <person name="Olsen J.V."/>
            <person name="Mann M."/>
        </authorList>
    </citation>
    <scope>ACETYLATION [LARGE SCALE ANALYSIS] AT LYS-449</scope>
    <scope>IDENTIFICATION BY MASS SPECTROMETRY [LARGE SCALE ANALYSIS]</scope>
</reference>
<reference key="14">
    <citation type="journal article" date="2011" name="BMC Syst. Biol.">
        <title>Initial characterization of the human central proteome.</title>
        <authorList>
            <person name="Burkard T.R."/>
            <person name="Planyavsky M."/>
            <person name="Kaupe I."/>
            <person name="Breitwieser F.P."/>
            <person name="Buerckstuemmer T."/>
            <person name="Bennett K.L."/>
            <person name="Superti-Furga G."/>
            <person name="Colinge J."/>
        </authorList>
    </citation>
    <scope>IDENTIFICATION BY MASS SPECTROMETRY [LARGE SCALE ANALYSIS]</scope>
</reference>
<reference key="15">
    <citation type="journal article" date="2011" name="J. Biol. Chem.">
        <title>GRAIL (gene related to anergy in lymphocytes) regulates cytoskeletal reorganization through ubiquitination and degradation of Arp2/3 subunit 5 and coronin 1A.</title>
        <authorList>
            <person name="Ichikawa D."/>
            <person name="Mizuno M."/>
            <person name="Yamamura T."/>
            <person name="Miyake S."/>
        </authorList>
    </citation>
    <scope>UBIQUITINATION BY RNF128</scope>
</reference>
<reference key="16">
    <citation type="journal article" date="2012" name="J. Biol. Chem.">
        <title>Constitutive turnover of phosphorylation at Thr-412 of human p57/coronin-1 regulates the interaction with actin.</title>
        <authorList>
            <person name="Oku T."/>
            <person name="Nakano M."/>
            <person name="Kaneko Y."/>
            <person name="Ando Y."/>
            <person name="Kenmotsu H."/>
            <person name="Itoh S."/>
            <person name="Tsuiji M."/>
            <person name="Seyama Y."/>
            <person name="Toyoshima S."/>
            <person name="Tsuji T."/>
        </authorList>
    </citation>
    <scope>PHOSPHORYLATION AT SER-2 AND THR-412</scope>
    <scope>INTERACTION WITH ACTIN</scope>
</reference>
<reference key="17">
    <citation type="journal article" date="2014" name="J. Proteomics">
        <title>An enzyme assisted RP-RPLC approach for in-depth analysis of human liver phosphoproteome.</title>
        <authorList>
            <person name="Bian Y."/>
            <person name="Song C."/>
            <person name="Cheng K."/>
            <person name="Dong M."/>
            <person name="Wang F."/>
            <person name="Huang J."/>
            <person name="Sun D."/>
            <person name="Wang L."/>
            <person name="Ye M."/>
            <person name="Zou H."/>
        </authorList>
    </citation>
    <scope>IDENTIFICATION BY MASS SPECTROMETRY [LARGE SCALE ANALYSIS]</scope>
    <source>
        <tissue>Liver</tissue>
    </source>
</reference>
<reference key="18">
    <citation type="journal article" date="2015" name="Proteomics">
        <title>N-terminome analysis of the human mitochondrial proteome.</title>
        <authorList>
            <person name="Vaca Jacome A.S."/>
            <person name="Rabilloud T."/>
            <person name="Schaeffer-Reiss C."/>
            <person name="Rompais M."/>
            <person name="Ayoub D."/>
            <person name="Lane L."/>
            <person name="Bairoch A."/>
            <person name="Van Dorsselaer A."/>
            <person name="Carapito C."/>
        </authorList>
    </citation>
    <scope>IDENTIFICATION BY MASS SPECTROMETRY [LARGE SCALE ANALYSIS]</scope>
</reference>
<reference key="19">
    <citation type="journal article" date="2013" name="J. Allergy Clin. Immunol.">
        <title>Whole-exome sequencing identifies Coronin-1A deficiency in 3 siblings with immunodeficiency and EBV-associated B-cell lymphoproliferation.</title>
        <authorList>
            <person name="Moshous D."/>
            <person name="Martin E."/>
            <person name="Carpentier W."/>
            <person name="Lim A."/>
            <person name="Callebaut I."/>
            <person name="Canioni D."/>
            <person name="Hauck F."/>
            <person name="Majewski J."/>
            <person name="Schwartzentruber J."/>
            <person name="Nitschke P."/>
            <person name="Sirvent N."/>
            <person name="Frange P."/>
            <person name="Picard C."/>
            <person name="Blanche S."/>
            <person name="Revy P."/>
            <person name="Fischer A."/>
            <person name="Latour S."/>
            <person name="Jabado N."/>
            <person name="de Villartay J.P."/>
        </authorList>
    </citation>
    <scope>VARIANT IMD8 MET-134</scope>
    <scope>CHARACTERIZATION OF VARIANT IMD8 MET-134</scope>
</reference>
<gene>
    <name type="primary">CORO1A</name>
    <name type="synonym">CORO1</name>
</gene>
<dbReference type="EMBL" id="D44497">
    <property type="protein sequence ID" value="BAA07940.1"/>
    <property type="molecule type" value="mRNA"/>
</dbReference>
<dbReference type="EMBL" id="X89109">
    <property type="protein sequence ID" value="CAA61482.1"/>
    <property type="molecule type" value="mRNA"/>
</dbReference>
<dbReference type="EMBL" id="U34690">
    <property type="protein sequence ID" value="AAA77058.1"/>
    <property type="molecule type" value="mRNA"/>
</dbReference>
<dbReference type="EMBL" id="AF495470">
    <property type="protein sequence ID" value="AAM18516.1"/>
    <property type="molecule type" value="mRNA"/>
</dbReference>
<dbReference type="EMBL" id="AK314714">
    <property type="protein sequence ID" value="BAG37258.1"/>
    <property type="molecule type" value="mRNA"/>
</dbReference>
<dbReference type="EMBL" id="CH471238">
    <property type="protein sequence ID" value="EAW79906.1"/>
    <property type="molecule type" value="Genomic_DNA"/>
</dbReference>
<dbReference type="EMBL" id="BC110374">
    <property type="protein sequence ID" value="AAI10375.1"/>
    <property type="molecule type" value="mRNA"/>
</dbReference>
<dbReference type="EMBL" id="BC126385">
    <property type="protein sequence ID" value="AAI26386.1"/>
    <property type="molecule type" value="mRNA"/>
</dbReference>
<dbReference type="EMBL" id="BC126387">
    <property type="protein sequence ID" value="AAI26388.1"/>
    <property type="molecule type" value="mRNA"/>
</dbReference>
<dbReference type="CCDS" id="CCDS10673.1"/>
<dbReference type="PIR" id="S65665">
    <property type="entry name" value="S65665"/>
</dbReference>
<dbReference type="RefSeq" id="NP_001180262.1">
    <property type="nucleotide sequence ID" value="NM_001193333.3"/>
</dbReference>
<dbReference type="RefSeq" id="NP_009005.1">
    <property type="nucleotide sequence ID" value="NM_007074.4"/>
</dbReference>
<dbReference type="RefSeq" id="XP_011544016.1">
    <property type="nucleotide sequence ID" value="XM_011545714.2"/>
</dbReference>
<dbReference type="SMR" id="P31146"/>
<dbReference type="BioGRID" id="116322">
    <property type="interactions" value="132"/>
</dbReference>
<dbReference type="FunCoup" id="P31146">
    <property type="interactions" value="605"/>
</dbReference>
<dbReference type="IntAct" id="P31146">
    <property type="interactions" value="78"/>
</dbReference>
<dbReference type="MINT" id="P31146"/>
<dbReference type="STRING" id="9606.ENSP00000219150"/>
<dbReference type="ChEMBL" id="CHEMBL5169128"/>
<dbReference type="GlyCosmos" id="P31146">
    <property type="glycosylation" value="2 sites, 1 glycan"/>
</dbReference>
<dbReference type="GlyGen" id="P31146">
    <property type="glycosylation" value="2 sites, 1 O-linked glycan (2 sites)"/>
</dbReference>
<dbReference type="iPTMnet" id="P31146"/>
<dbReference type="MetOSite" id="P31146"/>
<dbReference type="PhosphoSitePlus" id="P31146"/>
<dbReference type="SwissPalm" id="P31146"/>
<dbReference type="BioMuta" id="CORO1A"/>
<dbReference type="DMDM" id="1706004"/>
<dbReference type="OGP" id="P31146"/>
<dbReference type="jPOST" id="P31146"/>
<dbReference type="MassIVE" id="P31146"/>
<dbReference type="PaxDb" id="9606-ENSP00000219150"/>
<dbReference type="PeptideAtlas" id="P31146"/>
<dbReference type="ProteomicsDB" id="54759"/>
<dbReference type="Pumba" id="P31146"/>
<dbReference type="TopDownProteomics" id="P31146"/>
<dbReference type="Antibodypedia" id="27060">
    <property type="antibodies" value="476 antibodies from 39 providers"/>
</dbReference>
<dbReference type="DNASU" id="11151"/>
<dbReference type="Ensembl" id="ENST00000219150.10">
    <property type="protein sequence ID" value="ENSP00000219150.6"/>
    <property type="gene ID" value="ENSG00000102879.17"/>
</dbReference>
<dbReference type="Ensembl" id="ENST00000570045.5">
    <property type="protein sequence ID" value="ENSP00000455552.1"/>
    <property type="gene ID" value="ENSG00000102879.17"/>
</dbReference>
<dbReference type="GeneID" id="11151"/>
<dbReference type="KEGG" id="hsa:11151"/>
<dbReference type="MANE-Select" id="ENST00000219150.10">
    <property type="protein sequence ID" value="ENSP00000219150.6"/>
    <property type="RefSeq nucleotide sequence ID" value="NM_007074.4"/>
    <property type="RefSeq protein sequence ID" value="NP_009005.1"/>
</dbReference>
<dbReference type="UCSC" id="uc002dww.4">
    <property type="organism name" value="human"/>
</dbReference>
<dbReference type="AGR" id="HGNC:2252"/>
<dbReference type="CTD" id="11151"/>
<dbReference type="DisGeNET" id="11151"/>
<dbReference type="GeneCards" id="CORO1A"/>
<dbReference type="HGNC" id="HGNC:2252">
    <property type="gene designation" value="CORO1A"/>
</dbReference>
<dbReference type="HPA" id="ENSG00000102879">
    <property type="expression patterns" value="Group enriched (bone marrow, lymphoid tissue)"/>
</dbReference>
<dbReference type="MalaCards" id="CORO1A"/>
<dbReference type="MIM" id="605000">
    <property type="type" value="gene"/>
</dbReference>
<dbReference type="MIM" id="615401">
    <property type="type" value="phenotype"/>
</dbReference>
<dbReference type="neXtProt" id="NX_P31146"/>
<dbReference type="OpenTargets" id="ENSG00000102879"/>
<dbReference type="Orphanet" id="228003">
    <property type="disease" value="Severe combined immunodeficiency due to CORO1A deficiency"/>
</dbReference>
<dbReference type="PharmGKB" id="PA26768"/>
<dbReference type="VEuPathDB" id="HostDB:ENSG00000102879"/>
<dbReference type="eggNOG" id="KOG0303">
    <property type="taxonomic scope" value="Eukaryota"/>
</dbReference>
<dbReference type="GeneTree" id="ENSGT00940000160628"/>
<dbReference type="HOGENOM" id="CLU_026859_0_1_1"/>
<dbReference type="InParanoid" id="P31146"/>
<dbReference type="OMA" id="MVMVWEI"/>
<dbReference type="OrthoDB" id="1850764at2759"/>
<dbReference type="PAN-GO" id="P31146">
    <property type="GO annotations" value="3 GO annotations based on evolutionary models"/>
</dbReference>
<dbReference type="PhylomeDB" id="P31146"/>
<dbReference type="TreeFam" id="TF314280"/>
<dbReference type="PathwayCommons" id="P31146"/>
<dbReference type="Reactome" id="R-HSA-9636383">
    <property type="pathway name" value="Prevention of phagosomal-lysosomal fusion"/>
</dbReference>
<dbReference type="SignaLink" id="P31146"/>
<dbReference type="SIGNOR" id="P31146"/>
<dbReference type="BioGRID-ORCS" id="11151">
    <property type="hits" value="25 hits in 1172 CRISPR screens"/>
</dbReference>
<dbReference type="CD-CODE" id="FB4E32DD">
    <property type="entry name" value="Presynaptic clusters and postsynaptic densities"/>
</dbReference>
<dbReference type="ChiTaRS" id="CORO1A">
    <property type="organism name" value="human"/>
</dbReference>
<dbReference type="GeneWiki" id="CORO1A"/>
<dbReference type="GenomeRNAi" id="11151"/>
<dbReference type="Pharos" id="P31146">
    <property type="development level" value="Tbio"/>
</dbReference>
<dbReference type="PRO" id="PR:P31146"/>
<dbReference type="Proteomes" id="UP000005640">
    <property type="component" value="Chromosome 16"/>
</dbReference>
<dbReference type="RNAct" id="P31146">
    <property type="molecule type" value="protein"/>
</dbReference>
<dbReference type="Bgee" id="ENSG00000102879">
    <property type="expression patterns" value="Expressed in granulocyte and 170 other cell types or tissues"/>
</dbReference>
<dbReference type="ExpressionAtlas" id="P31146">
    <property type="expression patterns" value="baseline and differential"/>
</dbReference>
<dbReference type="GO" id="GO:0005884">
    <property type="term" value="C:actin filament"/>
    <property type="evidence" value="ECO:0000314"/>
    <property type="project" value="UniProtKB"/>
</dbReference>
<dbReference type="GO" id="GO:0030424">
    <property type="term" value="C:axon"/>
    <property type="evidence" value="ECO:0007669"/>
    <property type="project" value="Ensembl"/>
</dbReference>
<dbReference type="GO" id="GO:0005911">
    <property type="term" value="C:cell-cell junction"/>
    <property type="evidence" value="ECO:0007669"/>
    <property type="project" value="Ensembl"/>
</dbReference>
<dbReference type="GO" id="GO:0030864">
    <property type="term" value="C:cortical actin cytoskeleton"/>
    <property type="evidence" value="ECO:0000314"/>
    <property type="project" value="UniProtKB"/>
</dbReference>
<dbReference type="GO" id="GO:0005737">
    <property type="term" value="C:cytoplasm"/>
    <property type="evidence" value="ECO:0000314"/>
    <property type="project" value="UniProtKB"/>
</dbReference>
<dbReference type="GO" id="GO:0005829">
    <property type="term" value="C:cytosol"/>
    <property type="evidence" value="ECO:0000304"/>
    <property type="project" value="Reactome"/>
</dbReference>
<dbReference type="GO" id="GO:0005769">
    <property type="term" value="C:early endosome"/>
    <property type="evidence" value="ECO:0007669"/>
    <property type="project" value="Ensembl"/>
</dbReference>
<dbReference type="GO" id="GO:0070062">
    <property type="term" value="C:extracellular exosome"/>
    <property type="evidence" value="ECO:0007005"/>
    <property type="project" value="UniProtKB"/>
</dbReference>
<dbReference type="GO" id="GO:0098978">
    <property type="term" value="C:glutamatergic synapse"/>
    <property type="evidence" value="ECO:0007669"/>
    <property type="project" value="Ensembl"/>
</dbReference>
<dbReference type="GO" id="GO:0001772">
    <property type="term" value="C:immunological synapse"/>
    <property type="evidence" value="ECO:0000314"/>
    <property type="project" value="UniProtKB"/>
</dbReference>
<dbReference type="GO" id="GO:0030027">
    <property type="term" value="C:lamellipodium"/>
    <property type="evidence" value="ECO:0000314"/>
    <property type="project" value="UniProtKB"/>
</dbReference>
<dbReference type="GO" id="GO:0016020">
    <property type="term" value="C:membrane"/>
    <property type="evidence" value="ECO:0007005"/>
    <property type="project" value="UniProtKB"/>
</dbReference>
<dbReference type="GO" id="GO:0001891">
    <property type="term" value="C:phagocytic cup"/>
    <property type="evidence" value="ECO:0000314"/>
    <property type="project" value="UniProtKB"/>
</dbReference>
<dbReference type="GO" id="GO:0045335">
    <property type="term" value="C:phagocytic vesicle"/>
    <property type="evidence" value="ECO:0000314"/>
    <property type="project" value="UniProtKB"/>
</dbReference>
<dbReference type="GO" id="GO:0030670">
    <property type="term" value="C:phagocytic vesicle membrane"/>
    <property type="evidence" value="ECO:0007669"/>
    <property type="project" value="UniProtKB-SubCell"/>
</dbReference>
<dbReference type="GO" id="GO:0005886">
    <property type="term" value="C:plasma membrane"/>
    <property type="evidence" value="ECO:0000314"/>
    <property type="project" value="UniProtKB"/>
</dbReference>
<dbReference type="GO" id="GO:0032991">
    <property type="term" value="C:protein-containing complex"/>
    <property type="evidence" value="ECO:0000314"/>
    <property type="project" value="UniProtKB"/>
</dbReference>
<dbReference type="GO" id="GO:0003779">
    <property type="term" value="F:actin binding"/>
    <property type="evidence" value="ECO:0000353"/>
    <property type="project" value="UniProtKB"/>
</dbReference>
<dbReference type="GO" id="GO:0051015">
    <property type="term" value="F:actin filament binding"/>
    <property type="evidence" value="ECO:0000314"/>
    <property type="project" value="UniProtKB"/>
</dbReference>
<dbReference type="GO" id="GO:0003785">
    <property type="term" value="F:actin monomer binding"/>
    <property type="evidence" value="ECO:0000315"/>
    <property type="project" value="UniProtKB"/>
</dbReference>
<dbReference type="GO" id="GO:0008092">
    <property type="term" value="F:cytoskeletal protein binding"/>
    <property type="evidence" value="ECO:0000250"/>
    <property type="project" value="UniProtKB"/>
</dbReference>
<dbReference type="GO" id="GO:0032036">
    <property type="term" value="F:myosin heavy chain binding"/>
    <property type="evidence" value="ECO:0000353"/>
    <property type="project" value="UniProtKB"/>
</dbReference>
<dbReference type="GO" id="GO:0043548">
    <property type="term" value="F:phosphatidylinositol 3-kinase binding"/>
    <property type="evidence" value="ECO:0000314"/>
    <property type="project" value="UniProtKB"/>
</dbReference>
<dbReference type="GO" id="GO:0042803">
    <property type="term" value="F:protein homodimerization activity"/>
    <property type="evidence" value="ECO:0000314"/>
    <property type="project" value="UniProtKB"/>
</dbReference>
<dbReference type="GO" id="GO:0003723">
    <property type="term" value="F:RNA binding"/>
    <property type="evidence" value="ECO:0007005"/>
    <property type="project" value="UniProtKB"/>
</dbReference>
<dbReference type="GO" id="GO:0030036">
    <property type="term" value="P:actin cytoskeleton organization"/>
    <property type="evidence" value="ECO:0000315"/>
    <property type="project" value="UniProtKB"/>
</dbReference>
<dbReference type="GO" id="GO:0007015">
    <property type="term" value="P:actin filament organization"/>
    <property type="evidence" value="ECO:0000318"/>
    <property type="project" value="GO_Central"/>
</dbReference>
<dbReference type="GO" id="GO:0006816">
    <property type="term" value="P:calcium ion transport"/>
    <property type="evidence" value="ECO:0007669"/>
    <property type="project" value="Ensembl"/>
</dbReference>
<dbReference type="GO" id="GO:0016477">
    <property type="term" value="P:cell migration"/>
    <property type="evidence" value="ECO:0000318"/>
    <property type="project" value="GO_Central"/>
</dbReference>
<dbReference type="GO" id="GO:0031589">
    <property type="term" value="P:cell-substrate adhesion"/>
    <property type="evidence" value="ECO:0000315"/>
    <property type="project" value="UniProtKB"/>
</dbReference>
<dbReference type="GO" id="GO:0071353">
    <property type="term" value="P:cellular response to interleukin-4"/>
    <property type="evidence" value="ECO:0007669"/>
    <property type="project" value="Ensembl"/>
</dbReference>
<dbReference type="GO" id="GO:0061502">
    <property type="term" value="P:early endosome to recycling endosome transport"/>
    <property type="evidence" value="ECO:0007669"/>
    <property type="project" value="Ensembl"/>
</dbReference>
<dbReference type="GO" id="GO:0010631">
    <property type="term" value="P:epithelial cell migration"/>
    <property type="evidence" value="ECO:0007669"/>
    <property type="project" value="Ensembl"/>
</dbReference>
<dbReference type="GO" id="GO:0048873">
    <property type="term" value="P:homeostasis of number of cells within a tissue"/>
    <property type="evidence" value="ECO:0007669"/>
    <property type="project" value="Ensembl"/>
</dbReference>
<dbReference type="GO" id="GO:0045087">
    <property type="term" value="P:innate immune response"/>
    <property type="evidence" value="ECO:0000303"/>
    <property type="project" value="UniProtKB"/>
</dbReference>
<dbReference type="GO" id="GO:0030595">
    <property type="term" value="P:leukocyte chemotaxis"/>
    <property type="evidence" value="ECO:0007669"/>
    <property type="project" value="Ensembl"/>
</dbReference>
<dbReference type="GO" id="GO:0043320">
    <property type="term" value="P:natural killer cell degranulation"/>
    <property type="evidence" value="ECO:0000315"/>
    <property type="project" value="UniProtKB"/>
</dbReference>
<dbReference type="GO" id="GO:0051126">
    <property type="term" value="P:negative regulation of actin nucleation"/>
    <property type="evidence" value="ECO:0000314"/>
    <property type="project" value="UniProtKB"/>
</dbReference>
<dbReference type="GO" id="GO:0043524">
    <property type="term" value="P:negative regulation of neuron apoptotic process"/>
    <property type="evidence" value="ECO:0007669"/>
    <property type="project" value="Ensembl"/>
</dbReference>
<dbReference type="GO" id="GO:0031339">
    <property type="term" value="P:negative regulation of vesicle fusion"/>
    <property type="evidence" value="ECO:0007669"/>
    <property type="project" value="Ensembl"/>
</dbReference>
<dbReference type="GO" id="GO:0038180">
    <property type="term" value="P:nerve growth factor signaling pathway"/>
    <property type="evidence" value="ECO:0007669"/>
    <property type="project" value="Ensembl"/>
</dbReference>
<dbReference type="GO" id="GO:0051402">
    <property type="term" value="P:neuron apoptotic process"/>
    <property type="evidence" value="ECO:0007669"/>
    <property type="project" value="Ensembl"/>
</dbReference>
<dbReference type="GO" id="GO:0006909">
    <property type="term" value="P:phagocytosis"/>
    <property type="evidence" value="ECO:0000315"/>
    <property type="project" value="UniProtKB"/>
</dbReference>
<dbReference type="GO" id="GO:0001845">
    <property type="term" value="P:phagolysosome assembly"/>
    <property type="evidence" value="ECO:0000315"/>
    <property type="project" value="UniProtKB"/>
</dbReference>
<dbReference type="GO" id="GO:0050918">
    <property type="term" value="P:positive chemotaxis"/>
    <property type="evidence" value="ECO:0000314"/>
    <property type="project" value="UniProtKB"/>
</dbReference>
<dbReference type="GO" id="GO:2000406">
    <property type="term" value="P:positive regulation of T cell migration"/>
    <property type="evidence" value="ECO:0007669"/>
    <property type="project" value="Ensembl"/>
</dbReference>
<dbReference type="GO" id="GO:0042102">
    <property type="term" value="P:positive regulation of T cell proliferation"/>
    <property type="evidence" value="ECO:0007669"/>
    <property type="project" value="Ensembl"/>
</dbReference>
<dbReference type="GO" id="GO:0032956">
    <property type="term" value="P:regulation of actin cytoskeleton organization"/>
    <property type="evidence" value="ECO:0000315"/>
    <property type="project" value="UniProtKB"/>
</dbReference>
<dbReference type="GO" id="GO:0030833">
    <property type="term" value="P:regulation of actin filament polymerization"/>
    <property type="evidence" value="ECO:0007669"/>
    <property type="project" value="Ensembl"/>
</dbReference>
<dbReference type="GO" id="GO:0008360">
    <property type="term" value="P:regulation of cell shape"/>
    <property type="evidence" value="ECO:0007669"/>
    <property type="project" value="Ensembl"/>
</dbReference>
<dbReference type="GO" id="GO:0051279">
    <property type="term" value="P:regulation of release of sequestered calcium ion into cytosol"/>
    <property type="evidence" value="ECO:0007669"/>
    <property type="project" value="Ensembl"/>
</dbReference>
<dbReference type="GO" id="GO:0043029">
    <property type="term" value="P:T cell homeostasis"/>
    <property type="evidence" value="ECO:0007669"/>
    <property type="project" value="Ensembl"/>
</dbReference>
<dbReference type="GO" id="GO:0042098">
    <property type="term" value="P:T cell proliferation"/>
    <property type="evidence" value="ECO:0007669"/>
    <property type="project" value="Ensembl"/>
</dbReference>
<dbReference type="GO" id="GO:0072679">
    <property type="term" value="P:thymocyte migration"/>
    <property type="evidence" value="ECO:0007669"/>
    <property type="project" value="Ensembl"/>
</dbReference>
<dbReference type="GO" id="GO:0032796">
    <property type="term" value="P:uropod organization"/>
    <property type="evidence" value="ECO:0007669"/>
    <property type="project" value="Ensembl"/>
</dbReference>
<dbReference type="GO" id="GO:0006906">
    <property type="term" value="P:vesicle fusion"/>
    <property type="evidence" value="ECO:0007669"/>
    <property type="project" value="Ensembl"/>
</dbReference>
<dbReference type="CDD" id="cd14686">
    <property type="entry name" value="bZIP"/>
    <property type="match status" value="1"/>
</dbReference>
<dbReference type="FunFam" id="2.130.10.10:FF:000003">
    <property type="entry name" value="Coronin"/>
    <property type="match status" value="1"/>
</dbReference>
<dbReference type="Gene3D" id="2.130.10.10">
    <property type="entry name" value="YVTN repeat-like/Quinoprotein amine dehydrogenase"/>
    <property type="match status" value="1"/>
</dbReference>
<dbReference type="InterPro" id="IPR015505">
    <property type="entry name" value="Coronin"/>
</dbReference>
<dbReference type="InterPro" id="IPR015048">
    <property type="entry name" value="DUF1899"/>
</dbReference>
<dbReference type="InterPro" id="IPR015049">
    <property type="entry name" value="Trimer_CC"/>
</dbReference>
<dbReference type="InterPro" id="IPR015943">
    <property type="entry name" value="WD40/YVTN_repeat-like_dom_sf"/>
</dbReference>
<dbReference type="InterPro" id="IPR019775">
    <property type="entry name" value="WD40_repeat_CS"/>
</dbReference>
<dbReference type="InterPro" id="IPR036322">
    <property type="entry name" value="WD40_repeat_dom_sf"/>
</dbReference>
<dbReference type="InterPro" id="IPR001680">
    <property type="entry name" value="WD40_rpt"/>
</dbReference>
<dbReference type="PANTHER" id="PTHR10856">
    <property type="entry name" value="CORONIN"/>
    <property type="match status" value="1"/>
</dbReference>
<dbReference type="PANTHER" id="PTHR10856:SF18">
    <property type="entry name" value="CORONIN-1A"/>
    <property type="match status" value="1"/>
</dbReference>
<dbReference type="Pfam" id="PF08953">
    <property type="entry name" value="DUF1899"/>
    <property type="match status" value="1"/>
</dbReference>
<dbReference type="Pfam" id="PF08954">
    <property type="entry name" value="Trimer_CC"/>
    <property type="match status" value="1"/>
</dbReference>
<dbReference type="Pfam" id="PF00400">
    <property type="entry name" value="WD40"/>
    <property type="match status" value="3"/>
</dbReference>
<dbReference type="Pfam" id="PF16300">
    <property type="entry name" value="WD40_4"/>
    <property type="match status" value="1"/>
</dbReference>
<dbReference type="SMART" id="SM01166">
    <property type="entry name" value="DUF1899"/>
    <property type="match status" value="1"/>
</dbReference>
<dbReference type="SMART" id="SM01167">
    <property type="entry name" value="DUF1900"/>
    <property type="match status" value="1"/>
</dbReference>
<dbReference type="SMART" id="SM00320">
    <property type="entry name" value="WD40"/>
    <property type="match status" value="3"/>
</dbReference>
<dbReference type="SUPFAM" id="SSF50978">
    <property type="entry name" value="WD40 repeat-like"/>
    <property type="match status" value="1"/>
</dbReference>
<dbReference type="PROSITE" id="PS00678">
    <property type="entry name" value="WD_REPEATS_1"/>
    <property type="match status" value="2"/>
</dbReference>
<dbReference type="PROSITE" id="PS50082">
    <property type="entry name" value="WD_REPEATS_2"/>
    <property type="match status" value="2"/>
</dbReference>
<dbReference type="PROSITE" id="PS50294">
    <property type="entry name" value="WD_REPEATS_REGION"/>
    <property type="match status" value="1"/>
</dbReference>
<organism>
    <name type="scientific">Homo sapiens</name>
    <name type="common">Human</name>
    <dbReference type="NCBI Taxonomy" id="9606"/>
    <lineage>
        <taxon>Eukaryota</taxon>
        <taxon>Metazoa</taxon>
        <taxon>Chordata</taxon>
        <taxon>Craniata</taxon>
        <taxon>Vertebrata</taxon>
        <taxon>Euteleostomi</taxon>
        <taxon>Mammalia</taxon>
        <taxon>Eutheria</taxon>
        <taxon>Euarchontoglires</taxon>
        <taxon>Primates</taxon>
        <taxon>Haplorrhini</taxon>
        <taxon>Catarrhini</taxon>
        <taxon>Hominidae</taxon>
        <taxon>Homo</taxon>
    </lineage>
</organism>
<accession>P31146</accession>
<accession>B2RBL1</accession>
<accession>Q2YD73</accession>
<proteinExistence type="evidence at protein level"/>
<name>COR1A_HUMAN</name>
<protein>
    <recommendedName>
        <fullName>Coronin-1A</fullName>
    </recommendedName>
    <alternativeName>
        <fullName>Coronin-like protein A</fullName>
        <shortName>Clipin-A</shortName>
    </alternativeName>
    <alternativeName>
        <fullName>Coronin-like protein p57</fullName>
    </alternativeName>
    <alternativeName>
        <fullName>Tryptophan aspartate-containing coat protein</fullName>
        <shortName>TACO</shortName>
    </alternativeName>
</protein>
<evidence type="ECO:0000250" key="1"/>
<evidence type="ECO:0000250" key="2">
    <source>
        <dbReference type="UniProtKB" id="O89053"/>
    </source>
</evidence>
<evidence type="ECO:0000255" key="3"/>
<evidence type="ECO:0000256" key="4">
    <source>
        <dbReference type="SAM" id="MobiDB-lite"/>
    </source>
</evidence>
<evidence type="ECO:0000269" key="5">
    <source>
    </source>
</evidence>
<evidence type="ECO:0000269" key="6">
    <source>
    </source>
</evidence>
<evidence type="ECO:0000269" key="7">
    <source>
    </source>
</evidence>
<evidence type="ECO:0000269" key="8">
    <source>
    </source>
</evidence>
<evidence type="ECO:0000269" key="9">
    <source>
    </source>
</evidence>
<evidence type="ECO:0000269" key="10">
    <source ref="8"/>
</evidence>
<evidence type="ECO:0000305" key="11"/>
<evidence type="ECO:0007744" key="12">
    <source>
    </source>
</evidence>
<feature type="initiator methionine" description="Removed" evidence="10">
    <location>
        <position position="1"/>
    </location>
</feature>
<feature type="chain" id="PRO_0000050920" description="Coronin-1A">
    <location>
        <begin position="2"/>
        <end position="461"/>
    </location>
</feature>
<feature type="repeat" description="WD 1">
    <location>
        <begin position="13"/>
        <end position="63"/>
    </location>
</feature>
<feature type="repeat" description="WD 2">
    <location>
        <begin position="73"/>
        <end position="110"/>
    </location>
</feature>
<feature type="repeat" description="WD 3">
    <location>
        <begin position="123"/>
        <end position="160"/>
    </location>
</feature>
<feature type="repeat" description="WD 4">
    <location>
        <begin position="164"/>
        <end position="204"/>
    </location>
</feature>
<feature type="repeat" description="WD 5">
    <location>
        <begin position="207"/>
        <end position="251"/>
    </location>
</feature>
<feature type="repeat" description="WD 6">
    <location>
        <begin position="258"/>
        <end position="296"/>
    </location>
</feature>
<feature type="repeat" description="WD 7">
    <location>
        <begin position="302"/>
        <end position="349"/>
    </location>
</feature>
<feature type="region of interest" description="Disordered" evidence="4">
    <location>
        <begin position="403"/>
        <end position="432"/>
    </location>
</feature>
<feature type="coiled-coil region" evidence="3">
    <location>
        <begin position="424"/>
        <end position="460"/>
    </location>
</feature>
<feature type="compositionally biased region" description="Basic and acidic residues" evidence="4">
    <location>
        <begin position="403"/>
        <end position="418"/>
    </location>
</feature>
<feature type="modified residue" description="N-acetylserine" evidence="10">
    <location>
        <position position="2"/>
    </location>
</feature>
<feature type="modified residue" description="Phosphoserine; by PKC" evidence="8">
    <location>
        <position position="2"/>
    </location>
</feature>
<feature type="modified residue" description="Phosphothreonine; by PKC" evidence="8">
    <location>
        <position position="412"/>
    </location>
</feature>
<feature type="modified residue" description="Phosphoserine" evidence="2">
    <location>
        <position position="422"/>
    </location>
</feature>
<feature type="modified residue" description="N6-acetyllysine" evidence="12">
    <location>
        <position position="449"/>
    </location>
</feature>
<feature type="sequence variant" id="VAR_070447" description="In IMD8; the mutation causes a decrease in protein stability; patient T-cell blasts show delayed activation of signaling molecules MAPK3 and MAPK1; dbSNP:rs397514755." evidence="9">
    <original>V</original>
    <variation>M</variation>
    <location>
        <position position="134"/>
    </location>
</feature>
<feature type="sequence variant" id="VAR_011956" description="In dbSNP:rs1804109.">
    <original>R</original>
    <variation>K</variation>
    <location>
        <position position="415"/>
    </location>
</feature>
<feature type="sequence conflict" description="In Ref. 3; AAA77058." evidence="11" ref="3">
    <original>S</original>
    <variation>T</variation>
    <location>
        <position position="8"/>
    </location>
</feature>
<feature type="sequence conflict" description="In Ref. 3; AAA77058." evidence="11" ref="3">
    <original>R</original>
    <variation>W</variation>
    <location>
        <position position="245"/>
    </location>
</feature>